<dbReference type="EMBL" id="AK021190">
    <property type="protein sequence ID" value="BAB32323.1"/>
    <property type="molecule type" value="mRNA"/>
</dbReference>
<dbReference type="EMBL" id="AK032304">
    <property type="protein sequence ID" value="BAC27802.1"/>
    <property type="molecule type" value="mRNA"/>
</dbReference>
<dbReference type="EMBL" id="AK034943">
    <property type="protein sequence ID" value="BAC28890.1"/>
    <property type="molecule type" value="mRNA"/>
</dbReference>
<dbReference type="EMBL" id="AK035825">
    <property type="protein sequence ID" value="BAC29201.1"/>
    <property type="molecule type" value="mRNA"/>
</dbReference>
<dbReference type="EMBL" id="AK036910">
    <property type="protein sequence ID" value="BAC29635.1"/>
    <property type="molecule type" value="mRNA"/>
</dbReference>
<dbReference type="EMBL" id="AK044209">
    <property type="protein sequence ID" value="BAC31816.1"/>
    <property type="molecule type" value="mRNA"/>
</dbReference>
<dbReference type="EMBL" id="AK141615">
    <property type="protein sequence ID" value="BAE24768.1"/>
    <property type="molecule type" value="mRNA"/>
</dbReference>
<dbReference type="EMBL" id="AL450399">
    <property type="protein sequence ID" value="CAM19776.1"/>
    <property type="status" value="ALT_SEQ"/>
    <property type="molecule type" value="Genomic_DNA"/>
</dbReference>
<dbReference type="EMBL" id="AL450399">
    <property type="protein sequence ID" value="CAM19777.1"/>
    <property type="molecule type" value="Genomic_DNA"/>
</dbReference>
<dbReference type="EMBL" id="BC021479">
    <property type="protein sequence ID" value="AAH21479.1"/>
    <property type="molecule type" value="mRNA"/>
</dbReference>
<dbReference type="EMBL" id="BC051144">
    <property type="protein sequence ID" value="AAH51144.1"/>
    <property type="molecule type" value="mRNA"/>
</dbReference>
<dbReference type="CCDS" id="CCDS53050.1">
    <molecule id="Q8VDP2-1"/>
</dbReference>
<dbReference type="RefSeq" id="NP_084227.1">
    <molecule id="Q8VDP2-1"/>
    <property type="nucleotide sequence ID" value="NM_029951.1"/>
</dbReference>
<dbReference type="SMR" id="Q8VDP2"/>
<dbReference type="BioGRID" id="218822">
    <property type="interactions" value="4"/>
</dbReference>
<dbReference type="FunCoup" id="Q8VDP2">
    <property type="interactions" value="3851"/>
</dbReference>
<dbReference type="IntAct" id="Q8VDP2">
    <property type="interactions" value="1"/>
</dbReference>
<dbReference type="STRING" id="10090.ENSMUSP00000040134"/>
<dbReference type="iPTMnet" id="Q8VDP2"/>
<dbReference type="PhosphoSitePlus" id="Q8VDP2"/>
<dbReference type="PaxDb" id="10090-ENSMUSP00000110904"/>
<dbReference type="PeptideAtlas" id="Q8VDP2"/>
<dbReference type="Pumba" id="Q8VDP2"/>
<dbReference type="Antibodypedia" id="50191">
    <property type="antibodies" value="86 antibodies from 17 providers"/>
</dbReference>
<dbReference type="DNASU" id="77644"/>
<dbReference type="Ensembl" id="ENSMUST00000047486.6">
    <molecule id="Q8VDP2-1"/>
    <property type="protein sequence ID" value="ENSMUSP00000040134.6"/>
    <property type="gene ID" value="ENSMUSG00000006423.16"/>
</dbReference>
<dbReference type="Ensembl" id="ENSMUST00000115248.10">
    <molecule id="Q8VDP2-1"/>
    <property type="protein sequence ID" value="ENSMUSP00000110903.4"/>
    <property type="gene ID" value="ENSMUSG00000006423.16"/>
</dbReference>
<dbReference type="GeneID" id="77644"/>
<dbReference type="KEGG" id="mmu:77644"/>
<dbReference type="UCSC" id="uc012hfv.1">
    <molecule id="Q8VDP2-1"/>
    <property type="organism name" value="mouse"/>
</dbReference>
<dbReference type="AGR" id="MGI:1924894"/>
<dbReference type="CTD" id="63932"/>
<dbReference type="MGI" id="MGI:1924894">
    <property type="gene designation" value="Steep1"/>
</dbReference>
<dbReference type="VEuPathDB" id="HostDB:ENSMUSG00000006423"/>
<dbReference type="eggNOG" id="KOG4397">
    <property type="taxonomic scope" value="Eukaryota"/>
</dbReference>
<dbReference type="GeneTree" id="ENSGT00390000002197"/>
<dbReference type="HOGENOM" id="CLU_099571_1_0_1"/>
<dbReference type="InParanoid" id="Q8VDP2"/>
<dbReference type="OMA" id="HVTFVMF"/>
<dbReference type="OrthoDB" id="57399at9989"/>
<dbReference type="PhylomeDB" id="Q8VDP2"/>
<dbReference type="TreeFam" id="TF300272"/>
<dbReference type="Reactome" id="R-MMU-72163">
    <property type="pathway name" value="mRNA Splicing - Major Pathway"/>
</dbReference>
<dbReference type="BioGRID-ORCS" id="77644">
    <property type="hits" value="18 hits in 78 CRISPR screens"/>
</dbReference>
<dbReference type="PRO" id="PR:Q8VDP2"/>
<dbReference type="Proteomes" id="UP000000589">
    <property type="component" value="Chromosome X"/>
</dbReference>
<dbReference type="RNAct" id="Q8VDP2">
    <property type="molecule type" value="protein"/>
</dbReference>
<dbReference type="Bgee" id="ENSMUSG00000006423">
    <property type="expression patterns" value="Expressed in gonadal fat pad and 262 other cell types or tissues"/>
</dbReference>
<dbReference type="ExpressionAtlas" id="Q8VDP2">
    <property type="expression patterns" value="baseline and differential"/>
</dbReference>
<dbReference type="GO" id="GO:0044297">
    <property type="term" value="C:cell body"/>
    <property type="evidence" value="ECO:0000314"/>
    <property type="project" value="UniProtKB"/>
</dbReference>
<dbReference type="GO" id="GO:0005813">
    <property type="term" value="C:centrosome"/>
    <property type="evidence" value="ECO:0007669"/>
    <property type="project" value="Ensembl"/>
</dbReference>
<dbReference type="GO" id="GO:0005737">
    <property type="term" value="C:cytoplasm"/>
    <property type="evidence" value="ECO:0000250"/>
    <property type="project" value="UniProtKB"/>
</dbReference>
<dbReference type="GO" id="GO:0005789">
    <property type="term" value="C:endoplasmic reticulum membrane"/>
    <property type="evidence" value="ECO:0007669"/>
    <property type="project" value="UniProtKB-SubCell"/>
</dbReference>
<dbReference type="GO" id="GO:0005654">
    <property type="term" value="C:nucleoplasm"/>
    <property type="evidence" value="ECO:0007669"/>
    <property type="project" value="Ensembl"/>
</dbReference>
<dbReference type="GO" id="GO:0005634">
    <property type="term" value="C:nucleus"/>
    <property type="evidence" value="ECO:0000314"/>
    <property type="project" value="UniProtKB"/>
</dbReference>
<dbReference type="GO" id="GO:0030674">
    <property type="term" value="F:protein-macromolecule adaptor activity"/>
    <property type="evidence" value="ECO:0000250"/>
    <property type="project" value="UniProtKB"/>
</dbReference>
<dbReference type="GO" id="GO:0090158">
    <property type="term" value="P:endoplasmic reticulum membrane organization"/>
    <property type="evidence" value="ECO:0000250"/>
    <property type="project" value="UniProtKB"/>
</dbReference>
<dbReference type="GO" id="GO:0006888">
    <property type="term" value="P:endoplasmic reticulum to Golgi vesicle-mediated transport"/>
    <property type="evidence" value="ECO:0000250"/>
    <property type="project" value="UniProtKB"/>
</dbReference>
<dbReference type="GO" id="GO:0032527">
    <property type="term" value="P:protein exit from endoplasmic reticulum"/>
    <property type="evidence" value="ECO:0000250"/>
    <property type="project" value="UniProtKB"/>
</dbReference>
<dbReference type="InterPro" id="IPR029704">
    <property type="entry name" value="STEEP-like"/>
</dbReference>
<dbReference type="PANTHER" id="PTHR46355:SF1">
    <property type="entry name" value="STING ER EXIT PROTEIN"/>
    <property type="match status" value="1"/>
</dbReference>
<dbReference type="PANTHER" id="PTHR46355">
    <property type="entry name" value="UPF0428 PROTEIN CXORF56"/>
    <property type="match status" value="1"/>
</dbReference>
<proteinExistence type="evidence at protein level"/>
<gene>
    <name evidence="7" type="primary">Steep1</name>
</gene>
<reference key="1">
    <citation type="journal article" date="2005" name="Science">
        <title>The transcriptional landscape of the mammalian genome.</title>
        <authorList>
            <person name="Carninci P."/>
            <person name="Kasukawa T."/>
            <person name="Katayama S."/>
            <person name="Gough J."/>
            <person name="Frith M.C."/>
            <person name="Maeda N."/>
            <person name="Oyama R."/>
            <person name="Ravasi T."/>
            <person name="Lenhard B."/>
            <person name="Wells C."/>
            <person name="Kodzius R."/>
            <person name="Shimokawa K."/>
            <person name="Bajic V.B."/>
            <person name="Brenner S.E."/>
            <person name="Batalov S."/>
            <person name="Forrest A.R."/>
            <person name="Zavolan M."/>
            <person name="Davis M.J."/>
            <person name="Wilming L.G."/>
            <person name="Aidinis V."/>
            <person name="Allen J.E."/>
            <person name="Ambesi-Impiombato A."/>
            <person name="Apweiler R."/>
            <person name="Aturaliya R.N."/>
            <person name="Bailey T.L."/>
            <person name="Bansal M."/>
            <person name="Baxter L."/>
            <person name="Beisel K.W."/>
            <person name="Bersano T."/>
            <person name="Bono H."/>
            <person name="Chalk A.M."/>
            <person name="Chiu K.P."/>
            <person name="Choudhary V."/>
            <person name="Christoffels A."/>
            <person name="Clutterbuck D.R."/>
            <person name="Crowe M.L."/>
            <person name="Dalla E."/>
            <person name="Dalrymple B.P."/>
            <person name="de Bono B."/>
            <person name="Della Gatta G."/>
            <person name="di Bernardo D."/>
            <person name="Down T."/>
            <person name="Engstrom P."/>
            <person name="Fagiolini M."/>
            <person name="Faulkner G."/>
            <person name="Fletcher C.F."/>
            <person name="Fukushima T."/>
            <person name="Furuno M."/>
            <person name="Futaki S."/>
            <person name="Gariboldi M."/>
            <person name="Georgii-Hemming P."/>
            <person name="Gingeras T.R."/>
            <person name="Gojobori T."/>
            <person name="Green R.E."/>
            <person name="Gustincich S."/>
            <person name="Harbers M."/>
            <person name="Hayashi Y."/>
            <person name="Hensch T.K."/>
            <person name="Hirokawa N."/>
            <person name="Hill D."/>
            <person name="Huminiecki L."/>
            <person name="Iacono M."/>
            <person name="Ikeo K."/>
            <person name="Iwama A."/>
            <person name="Ishikawa T."/>
            <person name="Jakt M."/>
            <person name="Kanapin A."/>
            <person name="Katoh M."/>
            <person name="Kawasawa Y."/>
            <person name="Kelso J."/>
            <person name="Kitamura H."/>
            <person name="Kitano H."/>
            <person name="Kollias G."/>
            <person name="Krishnan S.P."/>
            <person name="Kruger A."/>
            <person name="Kummerfeld S.K."/>
            <person name="Kurochkin I.V."/>
            <person name="Lareau L.F."/>
            <person name="Lazarevic D."/>
            <person name="Lipovich L."/>
            <person name="Liu J."/>
            <person name="Liuni S."/>
            <person name="McWilliam S."/>
            <person name="Madan Babu M."/>
            <person name="Madera M."/>
            <person name="Marchionni L."/>
            <person name="Matsuda H."/>
            <person name="Matsuzawa S."/>
            <person name="Miki H."/>
            <person name="Mignone F."/>
            <person name="Miyake S."/>
            <person name="Morris K."/>
            <person name="Mottagui-Tabar S."/>
            <person name="Mulder N."/>
            <person name="Nakano N."/>
            <person name="Nakauchi H."/>
            <person name="Ng P."/>
            <person name="Nilsson R."/>
            <person name="Nishiguchi S."/>
            <person name="Nishikawa S."/>
            <person name="Nori F."/>
            <person name="Ohara O."/>
            <person name="Okazaki Y."/>
            <person name="Orlando V."/>
            <person name="Pang K.C."/>
            <person name="Pavan W.J."/>
            <person name="Pavesi G."/>
            <person name="Pesole G."/>
            <person name="Petrovsky N."/>
            <person name="Piazza S."/>
            <person name="Reed J."/>
            <person name="Reid J.F."/>
            <person name="Ring B.Z."/>
            <person name="Ringwald M."/>
            <person name="Rost B."/>
            <person name="Ruan Y."/>
            <person name="Salzberg S.L."/>
            <person name="Sandelin A."/>
            <person name="Schneider C."/>
            <person name="Schoenbach C."/>
            <person name="Sekiguchi K."/>
            <person name="Semple C.A."/>
            <person name="Seno S."/>
            <person name="Sessa L."/>
            <person name="Sheng Y."/>
            <person name="Shibata Y."/>
            <person name="Shimada H."/>
            <person name="Shimada K."/>
            <person name="Silva D."/>
            <person name="Sinclair B."/>
            <person name="Sperling S."/>
            <person name="Stupka E."/>
            <person name="Sugiura K."/>
            <person name="Sultana R."/>
            <person name="Takenaka Y."/>
            <person name="Taki K."/>
            <person name="Tammoja K."/>
            <person name="Tan S.L."/>
            <person name="Tang S."/>
            <person name="Taylor M.S."/>
            <person name="Tegner J."/>
            <person name="Teichmann S.A."/>
            <person name="Ueda H.R."/>
            <person name="van Nimwegen E."/>
            <person name="Verardo R."/>
            <person name="Wei C.L."/>
            <person name="Yagi K."/>
            <person name="Yamanishi H."/>
            <person name="Zabarovsky E."/>
            <person name="Zhu S."/>
            <person name="Zimmer A."/>
            <person name="Hide W."/>
            <person name="Bult C."/>
            <person name="Grimmond S.M."/>
            <person name="Teasdale R.D."/>
            <person name="Liu E.T."/>
            <person name="Brusic V."/>
            <person name="Quackenbush J."/>
            <person name="Wahlestedt C."/>
            <person name="Mattick J.S."/>
            <person name="Hume D.A."/>
            <person name="Kai C."/>
            <person name="Sasaki D."/>
            <person name="Tomaru Y."/>
            <person name="Fukuda S."/>
            <person name="Kanamori-Katayama M."/>
            <person name="Suzuki M."/>
            <person name="Aoki J."/>
            <person name="Arakawa T."/>
            <person name="Iida J."/>
            <person name="Imamura K."/>
            <person name="Itoh M."/>
            <person name="Kato T."/>
            <person name="Kawaji H."/>
            <person name="Kawagashira N."/>
            <person name="Kawashima T."/>
            <person name="Kojima M."/>
            <person name="Kondo S."/>
            <person name="Konno H."/>
            <person name="Nakano K."/>
            <person name="Ninomiya N."/>
            <person name="Nishio T."/>
            <person name="Okada M."/>
            <person name="Plessy C."/>
            <person name="Shibata K."/>
            <person name="Shiraki T."/>
            <person name="Suzuki S."/>
            <person name="Tagami M."/>
            <person name="Waki K."/>
            <person name="Watahiki A."/>
            <person name="Okamura-Oho Y."/>
            <person name="Suzuki H."/>
            <person name="Kawai J."/>
            <person name="Hayashizaki Y."/>
        </authorList>
    </citation>
    <scope>NUCLEOTIDE SEQUENCE [LARGE SCALE MRNA] (ISOFORMS 1 AND 2)</scope>
    <source>
        <strain>C57BL/6J</strain>
        <tissue>Cerebellum</tissue>
        <tissue>Embryo</tissue>
        <tissue>Hippocampus</tissue>
        <tissue>Olfactory bulb</tissue>
        <tissue>Retina</tissue>
        <tissue>Vagina</tissue>
    </source>
</reference>
<reference key="2">
    <citation type="journal article" date="2009" name="PLoS Biol.">
        <title>Lineage-specific biology revealed by a finished genome assembly of the mouse.</title>
        <authorList>
            <person name="Church D.M."/>
            <person name="Goodstadt L."/>
            <person name="Hillier L.W."/>
            <person name="Zody M.C."/>
            <person name="Goldstein S."/>
            <person name="She X."/>
            <person name="Bult C.J."/>
            <person name="Agarwala R."/>
            <person name="Cherry J.L."/>
            <person name="DiCuccio M."/>
            <person name="Hlavina W."/>
            <person name="Kapustin Y."/>
            <person name="Meric P."/>
            <person name="Maglott D."/>
            <person name="Birtle Z."/>
            <person name="Marques A.C."/>
            <person name="Graves T."/>
            <person name="Zhou S."/>
            <person name="Teague B."/>
            <person name="Potamousis K."/>
            <person name="Churas C."/>
            <person name="Place M."/>
            <person name="Herschleb J."/>
            <person name="Runnheim R."/>
            <person name="Forrest D."/>
            <person name="Amos-Landgraf J."/>
            <person name="Schwartz D.C."/>
            <person name="Cheng Z."/>
            <person name="Lindblad-Toh K."/>
            <person name="Eichler E.E."/>
            <person name="Ponting C.P."/>
        </authorList>
    </citation>
    <scope>NUCLEOTIDE SEQUENCE [LARGE SCALE GENOMIC DNA]</scope>
    <source>
        <strain>C57BL/6J</strain>
    </source>
</reference>
<reference key="3">
    <citation type="journal article" date="2004" name="Genome Res.">
        <title>The status, quality, and expansion of the NIH full-length cDNA project: the Mammalian Gene Collection (MGC).</title>
        <authorList>
            <consortium name="The MGC Project Team"/>
        </authorList>
    </citation>
    <scope>NUCLEOTIDE SEQUENCE [LARGE SCALE MRNA] (ISOFORM 1)</scope>
    <source>
        <strain>FVB/N</strain>
        <tissue>Mammary tumor</tissue>
    </source>
</reference>
<reference key="4">
    <citation type="journal article" date="2010" name="Cell">
        <title>A tissue-specific atlas of mouse protein phosphorylation and expression.</title>
        <authorList>
            <person name="Huttlin E.L."/>
            <person name="Jedrychowski M.P."/>
            <person name="Elias J.E."/>
            <person name="Goswami T."/>
            <person name="Rad R."/>
            <person name="Beausoleil S.A."/>
            <person name="Villen J."/>
            <person name="Haas W."/>
            <person name="Sowa M.E."/>
            <person name="Gygi S.P."/>
        </authorList>
    </citation>
    <scope>IDENTIFICATION BY MASS SPECTROMETRY [LARGE SCALE ANALYSIS]</scope>
    <source>
        <tissue>Spleen</tissue>
    </source>
</reference>
<reference key="5">
    <citation type="journal article" date="2018" name="Eur. J. Hum. Genet.">
        <title>CXorf56, a dendritic neuronal protein, identified as a new candidate gene for X-linked intellectual disability.</title>
        <authorList>
            <person name="Verkerk A.J.M.H."/>
            <person name="Zeidler S."/>
            <person name="Breedveld G."/>
            <person name="Overbeek L."/>
            <person name="Huigh D."/>
            <person name="Koster L."/>
            <person name="van der Linde H."/>
            <person name="de Esch C."/>
            <person name="Severijnen L.A."/>
            <person name="de Vries B.B.A."/>
            <person name="Swagemakers S.M.A."/>
            <person name="Willemsen R."/>
            <person name="Hoogeboom A.J.M."/>
            <person name="van der Spek P.J."/>
            <person name="Oostra B.A."/>
        </authorList>
    </citation>
    <scope>SUBCELLULAR LOCATION</scope>
    <scope>TISSUE SPECIFICITY</scope>
</reference>
<reference key="6">
    <citation type="journal article" date="2020" name="Nat. Immunol.">
        <title>STEEP mediates STING ER exit and activation of signaling.</title>
        <authorList>
            <person name="Zhang B.C."/>
            <person name="Nandakumar R."/>
            <person name="Reinert L.S."/>
            <person name="Huang J."/>
            <person name="Laustsen A."/>
            <person name="Gao Z.L."/>
            <person name="Sun C.L."/>
            <person name="Jensen S.B."/>
            <person name="Troldborg A."/>
            <person name="Assil S."/>
            <person name="Berthelsen M.F."/>
            <person name="Scavenius C."/>
            <person name="Zhang Y."/>
            <person name="Windross S.J."/>
            <person name="Olagnier D."/>
            <person name="Prabakaran T."/>
            <person name="Bodda C."/>
            <person name="Narita R."/>
            <person name="Cai Y."/>
            <person name="Zhang C.G."/>
            <person name="Stenmark H."/>
            <person name="Doucet C.M."/>
            <person name="Noda T."/>
            <person name="Guo Z."/>
            <person name="Goldbach-Mansky R."/>
            <person name="Hartmann R."/>
            <person name="Chen Z.J."/>
            <person name="Enghild J.J."/>
            <person name="Bak R.O."/>
            <person name="Thomsen M.K."/>
            <person name="Paludan S.R."/>
        </authorList>
    </citation>
    <scope>FUNCTION</scope>
</reference>
<reference key="7">
    <citation type="journal article" date="2020" name="Nat. Immunol.">
        <authorList>
            <person name="Zhang B.C."/>
            <person name="Nandakumar R."/>
            <person name="Reinert L.S."/>
            <person name="Huang J."/>
            <person name="Laustsen A."/>
            <person name="Gao Z.L."/>
            <person name="Sun C.L."/>
            <person name="Jensen S.B."/>
            <person name="Troldborg A."/>
            <person name="Assil S."/>
            <person name="Berthelsen M.F."/>
            <person name="Scavenius C."/>
            <person name="Zhang Y."/>
            <person name="Windross S.J."/>
            <person name="Olagnier D."/>
            <person name="Prabakaran T."/>
            <person name="Bodda C."/>
            <person name="Narita R."/>
            <person name="Cai Y."/>
            <person name="Zhang C.G."/>
            <person name="Stenmark H."/>
            <person name="Doucet C.M."/>
            <person name="Noda T."/>
            <person name="Guo Z."/>
            <person name="Goldbach-Mansky R."/>
            <person name="Hartmann R."/>
            <person name="Chen Z.J."/>
            <person name="Enghild J.J."/>
            <person name="Bak R.O."/>
            <person name="Thomsen M.K."/>
            <person name="Paludan S.R."/>
        </authorList>
    </citation>
    <scope>ERRATUM OF PUBMED:32690950</scope>
</reference>
<evidence type="ECO:0000250" key="1">
    <source>
        <dbReference type="UniProtKB" id="Q9H5V9"/>
    </source>
</evidence>
<evidence type="ECO:0000255" key="2"/>
<evidence type="ECO:0000269" key="3">
    <source>
    </source>
</evidence>
<evidence type="ECO:0000269" key="4">
    <source>
    </source>
</evidence>
<evidence type="ECO:0000303" key="5">
    <source>
    </source>
</evidence>
<evidence type="ECO:0000305" key="6"/>
<evidence type="ECO:0000312" key="7">
    <source>
        <dbReference type="MGI" id="MGI:1924894"/>
    </source>
</evidence>
<protein>
    <recommendedName>
        <fullName evidence="1">STING ER exit protein</fullName>
        <shortName evidence="1">STEEP</shortName>
    </recommendedName>
</protein>
<name>STEEP_MOUSE</name>
<sequence>MPKVVSRSVVCSDTRDREEYDDGEKPLHVYYCLCGQMVLVLDCQLEKLPMRPRDRSRVIDAAKHAHKFCNTEDEETTYLRRPEGIERQYRKKCAKCGLPLFYQSQPKNAPVTFIVDGAVVKFGQGFGKTNIYTQKQEPPKKVMMTKRTKDMGKFSSVTVSTIDEEEEEIEAREVADSYAQNAKVIEKQLERKGMSKRRLQELAELEAKKAKMKGTLIDNQFK</sequence>
<comment type="function">
    <text evidence="1 4">Molecular adapter that stimulates membrane curvature formation and subsequent endoplasmic reticulum exit site (ERES) establishment by recruiting PI3K complex I, leading to COPII vesicle-mediated transport (By similarity). Promotes endoplasmic reticulum (ER) exit of cGAMP-activated STING1 oligomers (PubMed:32690950).</text>
</comment>
<comment type="subunit">
    <text evidence="1">Interacts with STING1; interaction takes place upon cGAMP-activation and STING1 phosphorylation by MAP3K7/TAK1 and leads to recruitment of PI3K complex I. Interacts with PIK3C3; the STING1-STEEP1 interaction leads to recruitment of PI3K complex I. Interacts with ATG14.</text>
</comment>
<comment type="subcellular location">
    <subcellularLocation>
        <location evidence="3">Cytoplasm</location>
    </subcellularLocation>
    <subcellularLocation>
        <location evidence="1">Endoplasmic reticulum membrane</location>
        <topology evidence="1">Peripheral membrane protein</topology>
        <orientation evidence="1">Cytoplasmic side</orientation>
    </subcellularLocation>
    <subcellularLocation>
        <location evidence="3">Nucleus</location>
    </subcellularLocation>
    <text evidence="1 3">Recruited to the endoplasmic reticulum following interaction with phosphorylated STING1 (By similarity). Detected in the nucleus and cell soma of pyramidal neurons in the brain cortex and Purkinje cells, as well as in neurons in the granular layer in the cerebellum (PubMed:29374277).</text>
</comment>
<comment type="alternative products">
    <event type="alternative splicing"/>
    <isoform>
        <id>Q8VDP2-1</id>
        <name>1</name>
        <sequence type="displayed"/>
    </isoform>
    <isoform>
        <id>Q8VDP2-2</id>
        <name>2</name>
        <sequence type="described" ref="VSP_025569"/>
    </isoform>
</comment>
<comment type="tissue specificity">
    <text evidence="3">Expressed in neurons in the brain cortex and cerebellum (at protein level).</text>
</comment>
<comment type="similarity">
    <text evidence="6">Belongs to the STEEP1 family.</text>
</comment>
<comment type="sequence caution" evidence="6">
    <conflict type="erroneous gene model prediction">
        <sequence resource="EMBL-CDS" id="CAM19776"/>
    </conflict>
</comment>
<organism>
    <name type="scientific">Mus musculus</name>
    <name type="common">Mouse</name>
    <dbReference type="NCBI Taxonomy" id="10090"/>
    <lineage>
        <taxon>Eukaryota</taxon>
        <taxon>Metazoa</taxon>
        <taxon>Chordata</taxon>
        <taxon>Craniata</taxon>
        <taxon>Vertebrata</taxon>
        <taxon>Euteleostomi</taxon>
        <taxon>Mammalia</taxon>
        <taxon>Eutheria</taxon>
        <taxon>Euarchontoglires</taxon>
        <taxon>Glires</taxon>
        <taxon>Rodentia</taxon>
        <taxon>Myomorpha</taxon>
        <taxon>Muroidea</taxon>
        <taxon>Muridae</taxon>
        <taxon>Murinae</taxon>
        <taxon>Mus</taxon>
        <taxon>Mus</taxon>
    </lineage>
</organism>
<feature type="chain" id="PRO_0000287610" description="STING ER exit protein">
    <location>
        <begin position="1"/>
        <end position="222"/>
    </location>
</feature>
<feature type="coiled-coil region" evidence="2">
    <location>
        <begin position="170"/>
        <end position="220"/>
    </location>
</feature>
<feature type="splice variant" id="VSP_025569" description="In isoform 2." evidence="5">
    <original>AELEAKKAKMKGTLIDNQFK</original>
    <variation>VAGMLLYPVSREAGRSADRASFALGISLRTSCAAERVVIPLCNTQDGK</variation>
    <location>
        <begin position="203"/>
        <end position="222"/>
    </location>
</feature>
<feature type="sequence conflict" description="In Ref. 1; BAC31816." evidence="6" ref="1">
    <original>Q</original>
    <variation>H</variation>
    <location>
        <position position="200"/>
    </location>
</feature>
<feature type="sequence conflict" description="In Ref. 1; BAE24768." evidence="6" ref="1">
    <original>A</original>
    <variation>D</variation>
    <location>
        <position position="207"/>
    </location>
</feature>
<accession>Q8VDP2</accession>
<accession>A2A3V4</accession>
<accession>Q3URC0</accession>
<accession>Q8C8Z1</accession>
<accession>Q9CWC1</accession>
<keyword id="KW-0025">Alternative splicing</keyword>
<keyword id="KW-0175">Coiled coil</keyword>
<keyword id="KW-0963">Cytoplasm</keyword>
<keyword id="KW-0256">Endoplasmic reticulum</keyword>
<keyword id="KW-0472">Membrane</keyword>
<keyword id="KW-0539">Nucleus</keyword>
<keyword id="KW-1185">Reference proteome</keyword>